<organism>
    <name type="scientific">Shewanella denitrificans (strain OS217 / ATCC BAA-1090 / DSM 15013)</name>
    <dbReference type="NCBI Taxonomy" id="318161"/>
    <lineage>
        <taxon>Bacteria</taxon>
        <taxon>Pseudomonadati</taxon>
        <taxon>Pseudomonadota</taxon>
        <taxon>Gammaproteobacteria</taxon>
        <taxon>Alteromonadales</taxon>
        <taxon>Shewanellaceae</taxon>
        <taxon>Shewanella</taxon>
    </lineage>
</organism>
<feature type="chain" id="PRO_0000404316" description="Regulator of ribonuclease activity B">
    <location>
        <begin position="1"/>
        <end position="129"/>
    </location>
</feature>
<protein>
    <recommendedName>
        <fullName evidence="1">Regulator of ribonuclease activity B</fullName>
    </recommendedName>
</protein>
<name>RRAB_SHEDO</name>
<dbReference type="EMBL" id="CP000302">
    <property type="protein sequence ID" value="ABE53823.1"/>
    <property type="molecule type" value="Genomic_DNA"/>
</dbReference>
<dbReference type="RefSeq" id="WP_011494989.1">
    <property type="nucleotide sequence ID" value="NC_007954.1"/>
</dbReference>
<dbReference type="SMR" id="Q12RV3"/>
<dbReference type="STRING" id="318161.Sden_0531"/>
<dbReference type="KEGG" id="sdn:Sden_0531"/>
<dbReference type="eggNOG" id="COG3076">
    <property type="taxonomic scope" value="Bacteria"/>
</dbReference>
<dbReference type="HOGENOM" id="CLU_128640_0_0_6"/>
<dbReference type="OrthoDB" id="7065464at2"/>
<dbReference type="Proteomes" id="UP000001982">
    <property type="component" value="Chromosome"/>
</dbReference>
<dbReference type="GO" id="GO:0005737">
    <property type="term" value="C:cytoplasm"/>
    <property type="evidence" value="ECO:0007669"/>
    <property type="project" value="UniProtKB-SubCell"/>
</dbReference>
<dbReference type="GO" id="GO:0060698">
    <property type="term" value="F:endoribonuclease inhibitor activity"/>
    <property type="evidence" value="ECO:0007669"/>
    <property type="project" value="UniProtKB-UniRule"/>
</dbReference>
<dbReference type="GO" id="GO:0019899">
    <property type="term" value="F:enzyme binding"/>
    <property type="evidence" value="ECO:0007669"/>
    <property type="project" value="UniProtKB-UniRule"/>
</dbReference>
<dbReference type="Gene3D" id="3.30.70.970">
    <property type="entry name" value="RraB-like"/>
    <property type="match status" value="1"/>
</dbReference>
<dbReference type="HAMAP" id="MF_01888">
    <property type="entry name" value="RraB"/>
    <property type="match status" value="1"/>
</dbReference>
<dbReference type="InterPro" id="IPR016716">
    <property type="entry name" value="RraB"/>
</dbReference>
<dbReference type="InterPro" id="IPR036701">
    <property type="entry name" value="RraB-like_sf"/>
</dbReference>
<dbReference type="InterPro" id="IPR009671">
    <property type="entry name" value="RraB_dom"/>
</dbReference>
<dbReference type="NCBIfam" id="NF008393">
    <property type="entry name" value="PRK11191.1"/>
    <property type="match status" value="1"/>
</dbReference>
<dbReference type="Pfam" id="PF06877">
    <property type="entry name" value="RraB"/>
    <property type="match status" value="1"/>
</dbReference>
<dbReference type="PIRSF" id="PIRSF018193">
    <property type="entry name" value="UCP018193"/>
    <property type="match status" value="1"/>
</dbReference>
<dbReference type="SUPFAM" id="SSF89946">
    <property type="entry name" value="Hypothetical protein VC0424"/>
    <property type="match status" value="1"/>
</dbReference>
<proteinExistence type="inferred from homology"/>
<sequence length="129" mass="14704">MSMERQLKEQFAENREIVEALLGDGSDADSEYVIEHHFSSTNFDKLEKAAVDAFKLGFEVNDAEEMELEDGSEIFCFDAIANHKLDVALLDKACEQLMQVAHKQKVDYDGWGTYFIGDEIEEDDEEEQA</sequence>
<keyword id="KW-0963">Cytoplasm</keyword>
<keyword id="KW-1185">Reference proteome</keyword>
<gene>
    <name evidence="1" type="primary">rraB</name>
    <name type="ordered locus">Sden_0531</name>
</gene>
<comment type="function">
    <text evidence="1">Globally modulates RNA abundance by binding to RNase E (Rne) and regulating its endonucleolytic activity. Can modulate Rne action in a substrate-dependent manner by altering the composition of the degradosome.</text>
</comment>
<comment type="subunit">
    <text evidence="1">Interacts with the C-terminal region of Rne.</text>
</comment>
<comment type="subcellular location">
    <subcellularLocation>
        <location evidence="1">Cytoplasm</location>
    </subcellularLocation>
</comment>
<comment type="similarity">
    <text evidence="1">Belongs to the RraB family.</text>
</comment>
<reference key="1">
    <citation type="submission" date="2006-03" db="EMBL/GenBank/DDBJ databases">
        <title>Complete sequence of Shewanella denitrificans OS217.</title>
        <authorList>
            <consortium name="US DOE Joint Genome Institute"/>
            <person name="Copeland A."/>
            <person name="Lucas S."/>
            <person name="Lapidus A."/>
            <person name="Barry K."/>
            <person name="Detter J.C."/>
            <person name="Glavina del Rio T."/>
            <person name="Hammon N."/>
            <person name="Israni S."/>
            <person name="Dalin E."/>
            <person name="Tice H."/>
            <person name="Pitluck S."/>
            <person name="Brettin T."/>
            <person name="Bruce D."/>
            <person name="Han C."/>
            <person name="Tapia R."/>
            <person name="Gilna P."/>
            <person name="Kiss H."/>
            <person name="Schmutz J."/>
            <person name="Larimer F."/>
            <person name="Land M."/>
            <person name="Hauser L."/>
            <person name="Kyrpides N."/>
            <person name="Lykidis A."/>
            <person name="Richardson P."/>
        </authorList>
    </citation>
    <scope>NUCLEOTIDE SEQUENCE [LARGE SCALE GENOMIC DNA]</scope>
    <source>
        <strain>OS217 / ATCC BAA-1090 / DSM 15013</strain>
    </source>
</reference>
<accession>Q12RV3</accession>
<evidence type="ECO:0000255" key="1">
    <source>
        <dbReference type="HAMAP-Rule" id="MF_01888"/>
    </source>
</evidence>